<dbReference type="EMBL" id="CP000027">
    <property type="protein sequence ID" value="AAW40274.1"/>
    <property type="molecule type" value="Genomic_DNA"/>
</dbReference>
<dbReference type="RefSeq" id="WP_010936269.1">
    <property type="nucleotide sequence ID" value="NC_002936.3"/>
</dbReference>
<dbReference type="SMR" id="Q3Z963"/>
<dbReference type="FunCoup" id="Q3Z963">
    <property type="interactions" value="229"/>
</dbReference>
<dbReference type="STRING" id="243164.DET0492"/>
<dbReference type="GeneID" id="3230238"/>
<dbReference type="KEGG" id="det:DET0492"/>
<dbReference type="eggNOG" id="COG1841">
    <property type="taxonomic scope" value="Bacteria"/>
</dbReference>
<dbReference type="HOGENOM" id="CLU_131047_2_1_0"/>
<dbReference type="InParanoid" id="Q3Z963"/>
<dbReference type="Proteomes" id="UP000008289">
    <property type="component" value="Chromosome"/>
</dbReference>
<dbReference type="GO" id="GO:0015934">
    <property type="term" value="C:large ribosomal subunit"/>
    <property type="evidence" value="ECO:0007669"/>
    <property type="project" value="InterPro"/>
</dbReference>
<dbReference type="GO" id="GO:0003735">
    <property type="term" value="F:structural constituent of ribosome"/>
    <property type="evidence" value="ECO:0007669"/>
    <property type="project" value="InterPro"/>
</dbReference>
<dbReference type="GO" id="GO:0006412">
    <property type="term" value="P:translation"/>
    <property type="evidence" value="ECO:0007669"/>
    <property type="project" value="UniProtKB-UniRule"/>
</dbReference>
<dbReference type="CDD" id="cd01658">
    <property type="entry name" value="Ribosomal_L30"/>
    <property type="match status" value="1"/>
</dbReference>
<dbReference type="Gene3D" id="3.30.1390.20">
    <property type="entry name" value="Ribosomal protein L30, ferredoxin-like fold domain"/>
    <property type="match status" value="1"/>
</dbReference>
<dbReference type="HAMAP" id="MF_01371_B">
    <property type="entry name" value="Ribosomal_uL30_B"/>
    <property type="match status" value="1"/>
</dbReference>
<dbReference type="InterPro" id="IPR036919">
    <property type="entry name" value="Ribo_uL30_ferredoxin-like_sf"/>
</dbReference>
<dbReference type="InterPro" id="IPR005996">
    <property type="entry name" value="Ribosomal_uL30_bac-type"/>
</dbReference>
<dbReference type="InterPro" id="IPR016082">
    <property type="entry name" value="Ribosomal_uL30_ferredoxin-like"/>
</dbReference>
<dbReference type="NCBIfam" id="TIGR01308">
    <property type="entry name" value="rpmD_bact"/>
    <property type="match status" value="1"/>
</dbReference>
<dbReference type="Pfam" id="PF00327">
    <property type="entry name" value="Ribosomal_L30"/>
    <property type="match status" value="1"/>
</dbReference>
<dbReference type="PIRSF" id="PIRSF002211">
    <property type="entry name" value="Ribosomal_L30_bac-type"/>
    <property type="match status" value="1"/>
</dbReference>
<dbReference type="SUPFAM" id="SSF55129">
    <property type="entry name" value="Ribosomal protein L30p/L7e"/>
    <property type="match status" value="1"/>
</dbReference>
<keyword id="KW-0687">Ribonucleoprotein</keyword>
<keyword id="KW-0689">Ribosomal protein</keyword>
<sequence length="60" mass="6687">MAKIKITWVKSAIGYKFDQAATIKALGFKKLNQSVIQDDSAAIRGMILKVRHLVVLEEVT</sequence>
<proteinExistence type="inferred from homology"/>
<comment type="subunit">
    <text evidence="1">Part of the 50S ribosomal subunit.</text>
</comment>
<comment type="similarity">
    <text evidence="1">Belongs to the universal ribosomal protein uL30 family.</text>
</comment>
<evidence type="ECO:0000255" key="1">
    <source>
        <dbReference type="HAMAP-Rule" id="MF_01371"/>
    </source>
</evidence>
<evidence type="ECO:0000305" key="2"/>
<reference key="1">
    <citation type="journal article" date="2005" name="Science">
        <title>Genome sequence of the PCE-dechlorinating bacterium Dehalococcoides ethenogenes.</title>
        <authorList>
            <person name="Seshadri R."/>
            <person name="Adrian L."/>
            <person name="Fouts D.E."/>
            <person name="Eisen J.A."/>
            <person name="Phillippy A.M."/>
            <person name="Methe B.A."/>
            <person name="Ward N.L."/>
            <person name="Nelson W.C."/>
            <person name="DeBoy R.T."/>
            <person name="Khouri H.M."/>
            <person name="Kolonay J.F."/>
            <person name="Dodson R.J."/>
            <person name="Daugherty S.C."/>
            <person name="Brinkac L.M."/>
            <person name="Sullivan S.A."/>
            <person name="Madupu R."/>
            <person name="Nelson K.E."/>
            <person name="Kang K.H."/>
            <person name="Impraim M."/>
            <person name="Tran K."/>
            <person name="Robinson J.M."/>
            <person name="Forberger H.A."/>
            <person name="Fraser C.M."/>
            <person name="Zinder S.H."/>
            <person name="Heidelberg J.F."/>
        </authorList>
    </citation>
    <scope>NUCLEOTIDE SEQUENCE [LARGE SCALE GENOMIC DNA]</scope>
    <source>
        <strain>ATCC BAA-2266 / KCTC 15142 / 195</strain>
    </source>
</reference>
<protein>
    <recommendedName>
        <fullName evidence="1">Large ribosomal subunit protein uL30</fullName>
    </recommendedName>
    <alternativeName>
        <fullName evidence="2">50S ribosomal protein L30</fullName>
    </alternativeName>
</protein>
<gene>
    <name evidence="1" type="primary">rpmD</name>
    <name type="ordered locus">DET0492</name>
</gene>
<name>RL30_DEHM1</name>
<accession>Q3Z963</accession>
<organism>
    <name type="scientific">Dehalococcoides mccartyi (strain ATCC BAA-2266 / KCTC 15142 / 195)</name>
    <name type="common">Dehalococcoides ethenogenes (strain 195)</name>
    <dbReference type="NCBI Taxonomy" id="243164"/>
    <lineage>
        <taxon>Bacteria</taxon>
        <taxon>Bacillati</taxon>
        <taxon>Chloroflexota</taxon>
        <taxon>Dehalococcoidia</taxon>
        <taxon>Dehalococcoidales</taxon>
        <taxon>Dehalococcoidaceae</taxon>
        <taxon>Dehalococcoides</taxon>
    </lineage>
</organism>
<feature type="chain" id="PRO_0000347093" description="Large ribosomal subunit protein uL30">
    <location>
        <begin position="1"/>
        <end position="60"/>
    </location>
</feature>